<evidence type="ECO:0000255" key="1">
    <source>
        <dbReference type="HAMAP-Rule" id="MF_00038"/>
    </source>
</evidence>
<feature type="chain" id="PRO_1000090628" description="Phospho-N-acetylmuramoyl-pentapeptide-transferase">
    <location>
        <begin position="1"/>
        <end position="358"/>
    </location>
</feature>
<feature type="transmembrane region" description="Helical" evidence="1">
    <location>
        <begin position="24"/>
        <end position="44"/>
    </location>
</feature>
<feature type="transmembrane region" description="Helical" evidence="1">
    <location>
        <begin position="73"/>
        <end position="93"/>
    </location>
</feature>
<feature type="transmembrane region" description="Helical" evidence="1">
    <location>
        <begin position="95"/>
        <end position="115"/>
    </location>
</feature>
<feature type="transmembrane region" description="Helical" evidence="1">
    <location>
        <begin position="134"/>
        <end position="154"/>
    </location>
</feature>
<feature type="transmembrane region" description="Helical" evidence="1">
    <location>
        <begin position="169"/>
        <end position="189"/>
    </location>
</feature>
<feature type="transmembrane region" description="Helical" evidence="1">
    <location>
        <begin position="197"/>
        <end position="217"/>
    </location>
</feature>
<feature type="transmembrane region" description="Helical" evidence="1">
    <location>
        <begin position="233"/>
        <end position="253"/>
    </location>
</feature>
<feature type="transmembrane region" description="Helical" evidence="1">
    <location>
        <begin position="261"/>
        <end position="281"/>
    </location>
</feature>
<feature type="transmembrane region" description="Helical" evidence="1">
    <location>
        <begin position="286"/>
        <end position="306"/>
    </location>
</feature>
<feature type="transmembrane region" description="Helical" evidence="1">
    <location>
        <begin position="335"/>
        <end position="355"/>
    </location>
</feature>
<organism>
    <name type="scientific">Citrifermentans bemidjiense (strain ATCC BAA-1014 / DSM 16622 / JCM 12645 / Bem)</name>
    <name type="common">Geobacter bemidjiensis</name>
    <dbReference type="NCBI Taxonomy" id="404380"/>
    <lineage>
        <taxon>Bacteria</taxon>
        <taxon>Pseudomonadati</taxon>
        <taxon>Thermodesulfobacteriota</taxon>
        <taxon>Desulfuromonadia</taxon>
        <taxon>Geobacterales</taxon>
        <taxon>Geobacteraceae</taxon>
        <taxon>Citrifermentans</taxon>
    </lineage>
</organism>
<dbReference type="EC" id="2.7.8.13" evidence="1"/>
<dbReference type="EMBL" id="CP001124">
    <property type="protein sequence ID" value="ACH37517.1"/>
    <property type="molecule type" value="Genomic_DNA"/>
</dbReference>
<dbReference type="RefSeq" id="WP_012528924.1">
    <property type="nucleotide sequence ID" value="NC_011146.1"/>
</dbReference>
<dbReference type="SMR" id="B5EBP8"/>
<dbReference type="STRING" id="404380.Gbem_0488"/>
<dbReference type="KEGG" id="gbm:Gbem_0488"/>
<dbReference type="eggNOG" id="COG0472">
    <property type="taxonomic scope" value="Bacteria"/>
</dbReference>
<dbReference type="HOGENOM" id="CLU_023982_0_0_7"/>
<dbReference type="OrthoDB" id="9805475at2"/>
<dbReference type="UniPathway" id="UPA00219"/>
<dbReference type="Proteomes" id="UP000008825">
    <property type="component" value="Chromosome"/>
</dbReference>
<dbReference type="GO" id="GO:0005886">
    <property type="term" value="C:plasma membrane"/>
    <property type="evidence" value="ECO:0007669"/>
    <property type="project" value="UniProtKB-SubCell"/>
</dbReference>
<dbReference type="GO" id="GO:0046872">
    <property type="term" value="F:metal ion binding"/>
    <property type="evidence" value="ECO:0007669"/>
    <property type="project" value="UniProtKB-KW"/>
</dbReference>
<dbReference type="GO" id="GO:0008963">
    <property type="term" value="F:phospho-N-acetylmuramoyl-pentapeptide-transferase activity"/>
    <property type="evidence" value="ECO:0007669"/>
    <property type="project" value="UniProtKB-UniRule"/>
</dbReference>
<dbReference type="GO" id="GO:0051992">
    <property type="term" value="F:UDP-N-acetylmuramoyl-L-alanyl-D-glutamyl-meso-2,6-diaminopimelyl-D-alanyl-D-alanine:undecaprenyl-phosphate transferase activity"/>
    <property type="evidence" value="ECO:0007669"/>
    <property type="project" value="RHEA"/>
</dbReference>
<dbReference type="GO" id="GO:0051301">
    <property type="term" value="P:cell division"/>
    <property type="evidence" value="ECO:0007669"/>
    <property type="project" value="UniProtKB-KW"/>
</dbReference>
<dbReference type="GO" id="GO:0071555">
    <property type="term" value="P:cell wall organization"/>
    <property type="evidence" value="ECO:0007669"/>
    <property type="project" value="UniProtKB-KW"/>
</dbReference>
<dbReference type="GO" id="GO:0009252">
    <property type="term" value="P:peptidoglycan biosynthetic process"/>
    <property type="evidence" value="ECO:0007669"/>
    <property type="project" value="UniProtKB-UniRule"/>
</dbReference>
<dbReference type="GO" id="GO:0008360">
    <property type="term" value="P:regulation of cell shape"/>
    <property type="evidence" value="ECO:0007669"/>
    <property type="project" value="UniProtKB-KW"/>
</dbReference>
<dbReference type="CDD" id="cd06852">
    <property type="entry name" value="GT_MraY"/>
    <property type="match status" value="1"/>
</dbReference>
<dbReference type="HAMAP" id="MF_00038">
    <property type="entry name" value="MraY"/>
    <property type="match status" value="1"/>
</dbReference>
<dbReference type="InterPro" id="IPR000715">
    <property type="entry name" value="Glycosyl_transferase_4"/>
</dbReference>
<dbReference type="InterPro" id="IPR003524">
    <property type="entry name" value="PNAcMuramoyl-5peptid_Trfase"/>
</dbReference>
<dbReference type="InterPro" id="IPR018480">
    <property type="entry name" value="PNAcMuramoyl-5peptid_Trfase_CS"/>
</dbReference>
<dbReference type="NCBIfam" id="TIGR00445">
    <property type="entry name" value="mraY"/>
    <property type="match status" value="1"/>
</dbReference>
<dbReference type="PANTHER" id="PTHR22926">
    <property type="entry name" value="PHOSPHO-N-ACETYLMURAMOYL-PENTAPEPTIDE-TRANSFERASE"/>
    <property type="match status" value="1"/>
</dbReference>
<dbReference type="PANTHER" id="PTHR22926:SF5">
    <property type="entry name" value="PHOSPHO-N-ACETYLMURAMOYL-PENTAPEPTIDE-TRANSFERASE HOMOLOG"/>
    <property type="match status" value="1"/>
</dbReference>
<dbReference type="Pfam" id="PF00953">
    <property type="entry name" value="Glycos_transf_4"/>
    <property type="match status" value="1"/>
</dbReference>
<dbReference type="Pfam" id="PF10555">
    <property type="entry name" value="MraY_sig1"/>
    <property type="match status" value="1"/>
</dbReference>
<dbReference type="PROSITE" id="PS01347">
    <property type="entry name" value="MRAY_1"/>
    <property type="match status" value="1"/>
</dbReference>
<dbReference type="PROSITE" id="PS01348">
    <property type="entry name" value="MRAY_2"/>
    <property type="match status" value="1"/>
</dbReference>
<protein>
    <recommendedName>
        <fullName evidence="1">Phospho-N-acetylmuramoyl-pentapeptide-transferase</fullName>
        <ecNumber evidence="1">2.7.8.13</ecNumber>
    </recommendedName>
    <alternativeName>
        <fullName evidence="1">UDP-MurNAc-pentapeptide phosphotransferase</fullName>
    </alternativeName>
</protein>
<proteinExistence type="inferred from homology"/>
<keyword id="KW-0131">Cell cycle</keyword>
<keyword id="KW-0132">Cell division</keyword>
<keyword id="KW-0997">Cell inner membrane</keyword>
<keyword id="KW-1003">Cell membrane</keyword>
<keyword id="KW-0133">Cell shape</keyword>
<keyword id="KW-0961">Cell wall biogenesis/degradation</keyword>
<keyword id="KW-0460">Magnesium</keyword>
<keyword id="KW-0472">Membrane</keyword>
<keyword id="KW-0479">Metal-binding</keyword>
<keyword id="KW-0573">Peptidoglycan synthesis</keyword>
<keyword id="KW-1185">Reference proteome</keyword>
<keyword id="KW-0808">Transferase</keyword>
<keyword id="KW-0812">Transmembrane</keyword>
<keyword id="KW-1133">Transmembrane helix</keyword>
<name>MRAY_CITBB</name>
<reference key="1">
    <citation type="submission" date="2008-07" db="EMBL/GenBank/DDBJ databases">
        <title>Complete sequence of Geobacter bemidjiensis BEM.</title>
        <authorList>
            <consortium name="US DOE Joint Genome Institute"/>
            <person name="Lucas S."/>
            <person name="Copeland A."/>
            <person name="Lapidus A."/>
            <person name="Glavina del Rio T."/>
            <person name="Dalin E."/>
            <person name="Tice H."/>
            <person name="Bruce D."/>
            <person name="Goodwin L."/>
            <person name="Pitluck S."/>
            <person name="Kiss H."/>
            <person name="Brettin T."/>
            <person name="Detter J.C."/>
            <person name="Han C."/>
            <person name="Kuske C.R."/>
            <person name="Schmutz J."/>
            <person name="Larimer F."/>
            <person name="Land M."/>
            <person name="Hauser L."/>
            <person name="Kyrpides N."/>
            <person name="Lykidis A."/>
            <person name="Lovley D."/>
            <person name="Richardson P."/>
        </authorList>
    </citation>
    <scope>NUCLEOTIDE SEQUENCE [LARGE SCALE GENOMIC DNA]</scope>
    <source>
        <strain>ATCC BAA-1014 / DSM 16622 / JCM 12645 / Bem</strain>
    </source>
</reference>
<sequence>MLYHLLYPLASDYKLFNVFKYLTFRSIYAMITALLLAFIVGPWVVRKLEALQARQVIRTDGPESHLKKQGTPTMGGVLILVCIVLPTLLWADLKNVFIWLTLLIIVGYGVLGFVDDYKKVVEKNPKGLSPRQKMFWQMLLAAGVGIFLFYLPGFSTELYLPFFKRVHPELGILFIPFVMLVIVGASNAVNLTDGLDGLAIGPVAINAATYLLFCYIAGNAKLSGYLQIPYVPGAGELAVLCGAMVGAGLGFLWYNSYPAEVFMGDVGSLSLGGALGTLAVLTKQEILLVIVGGVFVVEALSVIFQVGSYKYRGKRIFRMAPIHHHFELKGVAEPKIIVRFWIITIILALVAISTLKMR</sequence>
<gene>
    <name evidence="1" type="primary">mraY</name>
    <name type="ordered locus">Gbem_0488</name>
</gene>
<comment type="function">
    <text evidence="1">Catalyzes the initial step of the lipid cycle reactions in the biosynthesis of the cell wall peptidoglycan: transfers peptidoglycan precursor phospho-MurNAc-pentapeptide from UDP-MurNAc-pentapeptide onto the lipid carrier undecaprenyl phosphate, yielding undecaprenyl-pyrophosphoryl-MurNAc-pentapeptide, known as lipid I.</text>
</comment>
<comment type="catalytic activity">
    <reaction evidence="1">
        <text>UDP-N-acetyl-alpha-D-muramoyl-L-alanyl-gamma-D-glutamyl-meso-2,6-diaminopimeloyl-D-alanyl-D-alanine + di-trans,octa-cis-undecaprenyl phosphate = di-trans,octa-cis-undecaprenyl diphospho-N-acetyl-alpha-D-muramoyl-L-alanyl-D-glutamyl-meso-2,6-diaminopimeloyl-D-alanyl-D-alanine + UMP</text>
        <dbReference type="Rhea" id="RHEA:28386"/>
        <dbReference type="ChEBI" id="CHEBI:57865"/>
        <dbReference type="ChEBI" id="CHEBI:60392"/>
        <dbReference type="ChEBI" id="CHEBI:61386"/>
        <dbReference type="ChEBI" id="CHEBI:61387"/>
        <dbReference type="EC" id="2.7.8.13"/>
    </reaction>
</comment>
<comment type="cofactor">
    <cofactor evidence="1">
        <name>Mg(2+)</name>
        <dbReference type="ChEBI" id="CHEBI:18420"/>
    </cofactor>
</comment>
<comment type="pathway">
    <text evidence="1">Cell wall biogenesis; peptidoglycan biosynthesis.</text>
</comment>
<comment type="subcellular location">
    <subcellularLocation>
        <location evidence="1">Cell inner membrane</location>
        <topology evidence="1">Multi-pass membrane protein</topology>
    </subcellularLocation>
</comment>
<comment type="similarity">
    <text evidence="1">Belongs to the glycosyltransferase 4 family. MraY subfamily.</text>
</comment>
<accession>B5EBP8</accession>